<keyword id="KW-1015">Disulfide bond</keyword>
<keyword id="KW-0274">FAD</keyword>
<keyword id="KW-0285">Flavoprotein</keyword>
<keyword id="KW-0349">Heme</keyword>
<keyword id="KW-0408">Iron</keyword>
<keyword id="KW-0479">Metal-binding</keyword>
<keyword id="KW-0500">Molybdenum</keyword>
<keyword id="KW-0520">NAD</keyword>
<keyword id="KW-0534">Nitrate assimilation</keyword>
<keyword id="KW-0560">Oxidoreductase</keyword>
<keyword id="KW-1185">Reference proteome</keyword>
<gene>
    <name type="primary">NIA</name>
</gene>
<protein>
    <recommendedName>
        <fullName>Nitrate reductase [NADH]</fullName>
        <shortName>NR</shortName>
        <ecNumber>1.7.1.1</ecNumber>
    </recommendedName>
</protein>
<accession>P23312</accession>
<accession>Q41377</accession>
<reference key="1">
    <citation type="journal article" date="1990" name="Plant Mol. Biol.">
        <title>Nucleotide sequence of a spinach nitrate reductase cDNA.</title>
        <authorList>
            <person name="Prosser I.M."/>
            <person name="Lazarus C.M."/>
        </authorList>
    </citation>
    <scope>NUCLEOTIDE SEQUENCE [MRNA]</scope>
</reference>
<reference key="2">
    <citation type="journal article" date="1997" name="Biochim. Biophys. Acta">
        <title>The nitrate reductase gene isolated from DNA of cultured spinach cells.</title>
        <authorList>
            <person name="Tamura N."/>
            <person name="Takahashi H."/>
            <person name="Takeba G."/>
            <person name="Satoi T."/>
            <person name="Nakagawa H."/>
        </authorList>
    </citation>
    <scope>NUCLEOTIDE SEQUENCE [GENOMIC DNA]</scope>
    <source>
        <strain>cv. Hoyo</strain>
    </source>
</reference>
<reference key="3">
    <citation type="journal article" date="1991" name="Plant Cell Physiol.">
        <title>Sequence analysis of cloned cDNA and proteolytic fragments for nitrate reductase from Spinacia oleracea L.</title>
        <authorList>
            <person name="Shiraishi N."/>
            <person name="Kubo Y."/>
            <person name="Takeba K."/>
            <person name="Kiyota S."/>
            <person name="Sakano K."/>
            <person name="Nakagawa H."/>
        </authorList>
    </citation>
    <scope>NUCLEOTIDE SEQUENCE OF 287-926</scope>
    <source>
        <strain>cv. Hoyo</strain>
    </source>
</reference>
<comment type="function">
    <text>Nitrate reductase is a key enzyme involved in the first step of nitrate assimilation in plants, fungi and bacteria.</text>
</comment>
<comment type="catalytic activity">
    <reaction>
        <text>nitrite + NAD(+) + H2O = nitrate + NADH + H(+)</text>
        <dbReference type="Rhea" id="RHEA:17913"/>
        <dbReference type="ChEBI" id="CHEBI:15377"/>
        <dbReference type="ChEBI" id="CHEBI:15378"/>
        <dbReference type="ChEBI" id="CHEBI:16301"/>
        <dbReference type="ChEBI" id="CHEBI:17632"/>
        <dbReference type="ChEBI" id="CHEBI:57540"/>
        <dbReference type="ChEBI" id="CHEBI:57945"/>
        <dbReference type="EC" id="1.7.1.1"/>
    </reaction>
</comment>
<comment type="cofactor">
    <cofactor evidence="1">
        <name>FAD</name>
        <dbReference type="ChEBI" id="CHEBI:57692"/>
    </cofactor>
    <text evidence="1">Binds 1 FAD per subunit.</text>
</comment>
<comment type="cofactor">
    <cofactor evidence="1">
        <name>heme</name>
        <dbReference type="ChEBI" id="CHEBI:30413"/>
    </cofactor>
    <text evidence="1">Binds 1 heme group per subunit.</text>
</comment>
<comment type="cofactor">
    <cofactor evidence="1">
        <name>Mo-molybdopterin</name>
        <dbReference type="ChEBI" id="CHEBI:71302"/>
    </cofactor>
    <text evidence="1">Binds 1 Mo-molybdopterin (Mo-MPT) cofactor per subunit.</text>
</comment>
<comment type="subunit">
    <text>Homodimer.</text>
</comment>
<comment type="similarity">
    <text evidence="9">Belongs to the nitrate reductase family.</text>
</comment>
<evidence type="ECO:0000250" key="1"/>
<evidence type="ECO:0000250" key="2">
    <source>
        <dbReference type="UniProtKB" id="A0A286R227"/>
    </source>
</evidence>
<evidence type="ECO:0000250" key="3">
    <source>
        <dbReference type="UniProtKB" id="P17571"/>
    </source>
</evidence>
<evidence type="ECO:0000250" key="4">
    <source>
        <dbReference type="UniProtKB" id="P49050"/>
    </source>
</evidence>
<evidence type="ECO:0000255" key="5"/>
<evidence type="ECO:0000255" key="6">
    <source>
        <dbReference type="PROSITE-ProRule" id="PRU00279"/>
    </source>
</evidence>
<evidence type="ECO:0000255" key="7">
    <source>
        <dbReference type="PROSITE-ProRule" id="PRU00716"/>
    </source>
</evidence>
<evidence type="ECO:0000256" key="8">
    <source>
        <dbReference type="SAM" id="MobiDB-lite"/>
    </source>
</evidence>
<evidence type="ECO:0000305" key="9"/>
<proteinExistence type="evidence at transcript level"/>
<dbReference type="EC" id="1.7.1.1"/>
<dbReference type="EMBL" id="M32600">
    <property type="protein sequence ID" value="AAA34033.1"/>
    <property type="molecule type" value="mRNA"/>
</dbReference>
<dbReference type="EMBL" id="D86226">
    <property type="protein sequence ID" value="BAA13047.1"/>
    <property type="molecule type" value="Genomic_DNA"/>
</dbReference>
<dbReference type="EMBL" id="U08029">
    <property type="protein sequence ID" value="AAA18377.1"/>
    <property type="molecule type" value="mRNA"/>
</dbReference>
<dbReference type="PIR" id="S11868">
    <property type="entry name" value="RDSPNH"/>
</dbReference>
<dbReference type="SMR" id="P23312"/>
<dbReference type="IntAct" id="P23312">
    <property type="interactions" value="1"/>
</dbReference>
<dbReference type="Proteomes" id="UP001155700">
    <property type="component" value="Unplaced"/>
</dbReference>
<dbReference type="GO" id="GO:0071949">
    <property type="term" value="F:FAD binding"/>
    <property type="evidence" value="ECO:0000250"/>
    <property type="project" value="UniProtKB"/>
</dbReference>
<dbReference type="GO" id="GO:0020037">
    <property type="term" value="F:heme binding"/>
    <property type="evidence" value="ECO:0007669"/>
    <property type="project" value="InterPro"/>
</dbReference>
<dbReference type="GO" id="GO:0030151">
    <property type="term" value="F:molybdenum ion binding"/>
    <property type="evidence" value="ECO:0000250"/>
    <property type="project" value="UniProtKB"/>
</dbReference>
<dbReference type="GO" id="GO:0043546">
    <property type="term" value="F:molybdopterin cofactor binding"/>
    <property type="evidence" value="ECO:0007669"/>
    <property type="project" value="InterPro"/>
</dbReference>
<dbReference type="GO" id="GO:0009703">
    <property type="term" value="F:nitrate reductase (NADH) activity"/>
    <property type="evidence" value="ECO:0000318"/>
    <property type="project" value="GO_Central"/>
</dbReference>
<dbReference type="GO" id="GO:0050464">
    <property type="term" value="F:nitrate reductase (NADPH) activity"/>
    <property type="evidence" value="ECO:0007669"/>
    <property type="project" value="InterPro"/>
</dbReference>
<dbReference type="GO" id="GO:0008482">
    <property type="term" value="F:sulfite oxidase activity"/>
    <property type="evidence" value="ECO:0007669"/>
    <property type="project" value="TreeGrafter"/>
</dbReference>
<dbReference type="GO" id="GO:0042128">
    <property type="term" value="P:nitrate assimilation"/>
    <property type="evidence" value="ECO:0000318"/>
    <property type="project" value="GO_Central"/>
</dbReference>
<dbReference type="GO" id="GO:0006809">
    <property type="term" value="P:nitric oxide biosynthetic process"/>
    <property type="evidence" value="ECO:0000318"/>
    <property type="project" value="GO_Central"/>
</dbReference>
<dbReference type="GO" id="GO:0006790">
    <property type="term" value="P:sulfur compound metabolic process"/>
    <property type="evidence" value="ECO:0007669"/>
    <property type="project" value="TreeGrafter"/>
</dbReference>
<dbReference type="CDD" id="cd06183">
    <property type="entry name" value="cyt_b5_reduct_like"/>
    <property type="match status" value="1"/>
</dbReference>
<dbReference type="CDD" id="cd02112">
    <property type="entry name" value="eukary_NR_Moco"/>
    <property type="match status" value="1"/>
</dbReference>
<dbReference type="FunFam" id="2.40.30.10:FF:000021">
    <property type="entry name" value="NADH-cytochrome b5 reductase"/>
    <property type="match status" value="1"/>
</dbReference>
<dbReference type="FunFam" id="2.60.40.650:FF:000001">
    <property type="entry name" value="Nitrate reductase"/>
    <property type="match status" value="1"/>
</dbReference>
<dbReference type="FunFam" id="3.90.420.10:FF:000003">
    <property type="entry name" value="Nitrate reductase"/>
    <property type="match status" value="1"/>
</dbReference>
<dbReference type="FunFam" id="3.40.50.80:FF:000025">
    <property type="entry name" value="Nitrate reductase [NADH]"/>
    <property type="match status" value="1"/>
</dbReference>
<dbReference type="FunFam" id="3.10.120.10:FF:000007">
    <property type="entry name" value="Sulfite oxidase, mitochondrial"/>
    <property type="match status" value="1"/>
</dbReference>
<dbReference type="Gene3D" id="2.60.40.650">
    <property type="match status" value="1"/>
</dbReference>
<dbReference type="Gene3D" id="3.10.120.10">
    <property type="entry name" value="Cytochrome b5-like heme/steroid binding domain"/>
    <property type="match status" value="1"/>
</dbReference>
<dbReference type="Gene3D" id="3.40.50.80">
    <property type="entry name" value="Nucleotide-binding domain of ferredoxin-NADP reductase (FNR) module"/>
    <property type="match status" value="1"/>
</dbReference>
<dbReference type="Gene3D" id="3.90.420.10">
    <property type="entry name" value="Oxidoreductase, molybdopterin-binding domain"/>
    <property type="match status" value="1"/>
</dbReference>
<dbReference type="Gene3D" id="2.40.30.10">
    <property type="entry name" value="Translation factors"/>
    <property type="match status" value="1"/>
</dbReference>
<dbReference type="InterPro" id="IPR008333">
    <property type="entry name" value="Cbr1-like_FAD-bd_dom"/>
</dbReference>
<dbReference type="InterPro" id="IPR001199">
    <property type="entry name" value="Cyt_B5-like_heme/steroid-bd"/>
</dbReference>
<dbReference type="InterPro" id="IPR036400">
    <property type="entry name" value="Cyt_B5-like_heme/steroid_sf"/>
</dbReference>
<dbReference type="InterPro" id="IPR018506">
    <property type="entry name" value="Cyt_B5_heme-BS"/>
</dbReference>
<dbReference type="InterPro" id="IPR017927">
    <property type="entry name" value="FAD-bd_FR_type"/>
</dbReference>
<dbReference type="InterPro" id="IPR001709">
    <property type="entry name" value="Flavoprot_Pyr_Nucl_cyt_Rdtase"/>
</dbReference>
<dbReference type="InterPro" id="IPR039261">
    <property type="entry name" value="FNR_nucleotide-bd"/>
</dbReference>
<dbReference type="InterPro" id="IPR014756">
    <property type="entry name" value="Ig_E-set"/>
</dbReference>
<dbReference type="InterPro" id="IPR005066">
    <property type="entry name" value="MoCF_OxRdtse_dimer"/>
</dbReference>
<dbReference type="InterPro" id="IPR008335">
    <property type="entry name" value="Mopterin_OxRdtase_euk"/>
</dbReference>
<dbReference type="InterPro" id="IPR012137">
    <property type="entry name" value="Nitr_rd_NADH"/>
</dbReference>
<dbReference type="InterPro" id="IPR001433">
    <property type="entry name" value="OxRdtase_FAD/NAD-bd"/>
</dbReference>
<dbReference type="InterPro" id="IPR000572">
    <property type="entry name" value="OxRdtase_Mopterin-bd_dom"/>
</dbReference>
<dbReference type="InterPro" id="IPR036374">
    <property type="entry name" value="OxRdtase_Mopterin-bd_sf"/>
</dbReference>
<dbReference type="InterPro" id="IPR022407">
    <property type="entry name" value="OxRdtase_Mopterin_BS"/>
</dbReference>
<dbReference type="InterPro" id="IPR017938">
    <property type="entry name" value="Riboflavin_synthase-like_b-brl"/>
</dbReference>
<dbReference type="PANTHER" id="PTHR19372:SF7">
    <property type="entry name" value="SULFITE OXIDASE, MITOCHONDRIAL"/>
    <property type="match status" value="1"/>
</dbReference>
<dbReference type="PANTHER" id="PTHR19372">
    <property type="entry name" value="SULFITE REDUCTASE"/>
    <property type="match status" value="1"/>
</dbReference>
<dbReference type="Pfam" id="PF00173">
    <property type="entry name" value="Cyt-b5"/>
    <property type="match status" value="1"/>
</dbReference>
<dbReference type="Pfam" id="PF00970">
    <property type="entry name" value="FAD_binding_6"/>
    <property type="match status" value="1"/>
</dbReference>
<dbReference type="Pfam" id="PF03404">
    <property type="entry name" value="Mo-co_dimer"/>
    <property type="match status" value="1"/>
</dbReference>
<dbReference type="Pfam" id="PF00175">
    <property type="entry name" value="NAD_binding_1"/>
    <property type="match status" value="1"/>
</dbReference>
<dbReference type="Pfam" id="PF00174">
    <property type="entry name" value="Oxidored_molyb"/>
    <property type="match status" value="1"/>
</dbReference>
<dbReference type="PIRSF" id="PIRSF000233">
    <property type="entry name" value="Nitr_rd_NADH"/>
    <property type="match status" value="1"/>
</dbReference>
<dbReference type="PRINTS" id="PR00406">
    <property type="entry name" value="CYTB5RDTASE"/>
</dbReference>
<dbReference type="PRINTS" id="PR00363">
    <property type="entry name" value="CYTOCHROMEB5"/>
</dbReference>
<dbReference type="PRINTS" id="PR00407">
    <property type="entry name" value="EUMOPTERIN"/>
</dbReference>
<dbReference type="PRINTS" id="PR00371">
    <property type="entry name" value="FPNCR"/>
</dbReference>
<dbReference type="SMART" id="SM01117">
    <property type="entry name" value="Cyt-b5"/>
    <property type="match status" value="1"/>
</dbReference>
<dbReference type="SUPFAM" id="SSF55856">
    <property type="entry name" value="Cytochrome b5-like heme/steroid binding domain"/>
    <property type="match status" value="1"/>
</dbReference>
<dbReference type="SUPFAM" id="SSF81296">
    <property type="entry name" value="E set domains"/>
    <property type="match status" value="1"/>
</dbReference>
<dbReference type="SUPFAM" id="SSF52343">
    <property type="entry name" value="Ferredoxin reductase-like, C-terminal NADP-linked domain"/>
    <property type="match status" value="1"/>
</dbReference>
<dbReference type="SUPFAM" id="SSF56524">
    <property type="entry name" value="Oxidoreductase molybdopterin-binding domain"/>
    <property type="match status" value="1"/>
</dbReference>
<dbReference type="SUPFAM" id="SSF63380">
    <property type="entry name" value="Riboflavin synthase domain-like"/>
    <property type="match status" value="1"/>
</dbReference>
<dbReference type="PROSITE" id="PS00191">
    <property type="entry name" value="CYTOCHROME_B5_1"/>
    <property type="match status" value="1"/>
</dbReference>
<dbReference type="PROSITE" id="PS50255">
    <property type="entry name" value="CYTOCHROME_B5_2"/>
    <property type="match status" value="1"/>
</dbReference>
<dbReference type="PROSITE" id="PS51384">
    <property type="entry name" value="FAD_FR"/>
    <property type="match status" value="1"/>
</dbReference>
<dbReference type="PROSITE" id="PS00559">
    <property type="entry name" value="MOLYBDOPTERIN_EUK"/>
    <property type="match status" value="1"/>
</dbReference>
<organism>
    <name type="scientific">Spinacia oleracea</name>
    <name type="common">Spinach</name>
    <dbReference type="NCBI Taxonomy" id="3562"/>
    <lineage>
        <taxon>Eukaryota</taxon>
        <taxon>Viridiplantae</taxon>
        <taxon>Streptophyta</taxon>
        <taxon>Embryophyta</taxon>
        <taxon>Tracheophyta</taxon>
        <taxon>Spermatophyta</taxon>
        <taxon>Magnoliopsida</taxon>
        <taxon>eudicotyledons</taxon>
        <taxon>Gunneridae</taxon>
        <taxon>Pentapetalae</taxon>
        <taxon>Caryophyllales</taxon>
        <taxon>Chenopodiaceae</taxon>
        <taxon>Chenopodioideae</taxon>
        <taxon>Anserineae</taxon>
        <taxon>Spinacia</taxon>
    </lineage>
</organism>
<feature type="chain" id="PRO_0000166071" description="Nitrate reductase [NADH]">
    <location>
        <begin position="1"/>
        <end position="926"/>
    </location>
</feature>
<feature type="domain" description="Cytochrome b5 heme-binding" evidence="6">
    <location>
        <begin position="551"/>
        <end position="626"/>
    </location>
</feature>
<feature type="domain" description="FAD-binding FR-type" evidence="7">
    <location>
        <begin position="670"/>
        <end position="782"/>
    </location>
</feature>
<feature type="region of interest" description="Disordered" evidence="8">
    <location>
        <begin position="1"/>
        <end position="85"/>
    </location>
</feature>
<feature type="compositionally biased region" description="Polar residues" evidence="8">
    <location>
        <begin position="36"/>
        <end position="46"/>
    </location>
</feature>
<feature type="compositionally biased region" description="Low complexity" evidence="8">
    <location>
        <begin position="58"/>
        <end position="73"/>
    </location>
</feature>
<feature type="binding site" evidence="4">
    <location>
        <position position="204"/>
    </location>
    <ligand>
        <name>Mo-molybdopterin</name>
        <dbReference type="ChEBI" id="CHEBI:71302"/>
    </ligand>
    <ligandPart>
        <name>Mo</name>
        <dbReference type="ChEBI" id="CHEBI:28685"/>
    </ligandPart>
</feature>
<feature type="binding site" description="axial binding residue" evidence="6">
    <location>
        <position position="586"/>
    </location>
    <ligand>
        <name>heme</name>
        <dbReference type="ChEBI" id="CHEBI:30413"/>
    </ligand>
    <ligandPart>
        <name>Fe</name>
        <dbReference type="ChEBI" id="CHEBI:18248"/>
    </ligandPart>
</feature>
<feature type="binding site" description="axial binding residue" evidence="6">
    <location>
        <position position="609"/>
    </location>
    <ligand>
        <name>heme</name>
        <dbReference type="ChEBI" id="CHEBI:30413"/>
    </ligand>
    <ligandPart>
        <name>Fe</name>
        <dbReference type="ChEBI" id="CHEBI:18248"/>
    </ligandPart>
</feature>
<feature type="binding site" evidence="2">
    <location>
        <begin position="722"/>
        <end position="725"/>
    </location>
    <ligand>
        <name>FAD</name>
        <dbReference type="ChEBI" id="CHEBI:57692"/>
    </ligand>
</feature>
<feature type="binding site" evidence="2">
    <location>
        <begin position="739"/>
        <end position="743"/>
    </location>
    <ligand>
        <name>FAD</name>
        <dbReference type="ChEBI" id="CHEBI:57692"/>
    </ligand>
</feature>
<feature type="binding site" evidence="3">
    <location>
        <position position="744"/>
    </location>
    <ligand>
        <name>FAD</name>
        <dbReference type="ChEBI" id="CHEBI:57692"/>
    </ligand>
</feature>
<feature type="binding site" evidence="2">
    <location>
        <position position="751"/>
    </location>
    <ligand>
        <name>FAD</name>
        <dbReference type="ChEBI" id="CHEBI:57692"/>
    </ligand>
</feature>
<feature type="binding site" evidence="2">
    <location>
        <begin position="756"/>
        <end position="758"/>
    </location>
    <ligand>
        <name>FAD</name>
        <dbReference type="ChEBI" id="CHEBI:57692"/>
    </ligand>
</feature>
<feature type="binding site" evidence="2">
    <location>
        <position position="809"/>
    </location>
    <ligand>
        <name>FAD</name>
        <dbReference type="ChEBI" id="CHEBI:57692"/>
    </ligand>
</feature>
<feature type="disulfide bond" description="Interchain" evidence="5">
    <location>
        <position position="443"/>
    </location>
</feature>
<feature type="sequence conflict" description="In Ref. 2; BAA13047." evidence="9" ref="2">
    <original>D</original>
    <variation>A</variation>
    <location>
        <position position="303"/>
    </location>
</feature>
<sequence>MAASVDRQYHPAPMSGVVRTPFSNHHRSDSPVRNGYTFSNPPSSNGVVKPGEKIKLVDNNSNSNNGSNNNNNRYDSDSEEDDDENEMNVWNEMIKKGNSELEPSSVDSRDEGTADQWIERNPSMIRLTGKHPFNSEPPLTRLMHHGFLTPVPLHYVRNHGPVPNAKWEDWTVEVTGLVKRPIRFTMDQLVNDFQSREFPVTLVCAGNRRKEQNMTKQSIGFNWGSAAVSTSVWRGVPLRDVLKRCGVMSSLKGALNVCFEGAEDLPGGGGSKYGTSVKREFAMDPARDIILAYMQNGEKLSPDHGYPVRMIIPGFIGGRMVKWLKRIIVTTTESDNYYHYKDNRVLPSHVDAELANSEAWWYKQEYIINELNVNSVITSPCHEEILPINAWTTQRPYTMRGYAYSGGGRKVTRVEVTMDGGDTWDICELDHQERGSKYGKFWCWCFWSLEVEVLDLLGAKEIGVRAWDESLNTQPEKLIWNVMGMMNNCWFRVKTNVCKPHKGEIGIVFEHPTQPGNKSGGWMARERHLEISDSGPTLKRTASTPFMNTTSKMYSMSEVKKHNTADSAWIVVHGNVYNATRFLKDHPGGSDSILINAGTDCTEEFDAIHSDKAKRLLEDFRIGELISTGYTSDSSSPGNSVHGGSVYSGLAGLAPITEAVPLRNVALNPRVKIPCKLIEKVSLSHDVRRFRFGLPSEDQVLGLPVGKHIFLCANVDDKLCMRAYTPSSTIDVVGYFDLVVKVYFKDVHPRFPNGGVMSQHLDSLSLGSIVDVKGPLGHIEYLGKGNFTVHGKPKFAKKLAMISGGTGITPIYQVMQAILKDPEDKTEMHVVYANRTEEDILLREELDKWADEFRDRVKVWYVVEKAEEGWKYDTGFISEKILRDHVPAVGDDVLALTCGPPPMIQFAVQPNLDKMGFDIKEQLLIF</sequence>
<name>NIA_SPIOL</name>